<gene>
    <name type="primary">rsuA</name>
    <name type="ordered locus">STM2222</name>
</gene>
<sequence>MRLDKFIAQQLGVSRAIAGREIRGNRVTVDGDIIKNAAFKLLPEHAVAYDGNPLAQQHGPRYFMLNKPQGYVCSTDDPDHPTVLYFLDEPVAYKLHAAGRLDIDTTGLVLMTDDGQWSHRITSPRHHCEKTYLVTLESPVADDTAAQFAKGVQLHNEKDLTKPATLEVITPVQVRLTISEGRYHQVKRMFAAVGNRVVELHRERIGAITLDENLAPGEYRPLTEEEIASVG</sequence>
<dbReference type="EC" id="5.4.99.19"/>
<dbReference type="EMBL" id="AE006468">
    <property type="protein sequence ID" value="AAL21125.1"/>
    <property type="molecule type" value="Genomic_DNA"/>
</dbReference>
<dbReference type="RefSeq" id="NP_461166.1">
    <property type="nucleotide sequence ID" value="NC_003197.2"/>
</dbReference>
<dbReference type="RefSeq" id="WP_001234836.1">
    <property type="nucleotide sequence ID" value="NC_003197.2"/>
</dbReference>
<dbReference type="SMR" id="P65840"/>
<dbReference type="STRING" id="99287.STM2222"/>
<dbReference type="PaxDb" id="99287-STM2222"/>
<dbReference type="GeneID" id="1253744"/>
<dbReference type="KEGG" id="stm:STM2222"/>
<dbReference type="PATRIC" id="fig|99287.12.peg.2354"/>
<dbReference type="HOGENOM" id="CLU_024979_1_2_6"/>
<dbReference type="OMA" id="QGKYHQV"/>
<dbReference type="PhylomeDB" id="P65840"/>
<dbReference type="BioCyc" id="SENT99287:STM2222-MONOMER"/>
<dbReference type="Proteomes" id="UP000001014">
    <property type="component" value="Chromosome"/>
</dbReference>
<dbReference type="GO" id="GO:0005829">
    <property type="term" value="C:cytosol"/>
    <property type="evidence" value="ECO:0000318"/>
    <property type="project" value="GO_Central"/>
</dbReference>
<dbReference type="GO" id="GO:0160136">
    <property type="term" value="F:16S rRNA pseudouridine(516) synthase activity"/>
    <property type="evidence" value="ECO:0007669"/>
    <property type="project" value="UniProtKB-EC"/>
</dbReference>
<dbReference type="GO" id="GO:0009982">
    <property type="term" value="F:pseudouridine synthase activity"/>
    <property type="evidence" value="ECO:0000318"/>
    <property type="project" value="GO_Central"/>
</dbReference>
<dbReference type="GO" id="GO:0003723">
    <property type="term" value="F:RNA binding"/>
    <property type="evidence" value="ECO:0007669"/>
    <property type="project" value="UniProtKB-KW"/>
</dbReference>
<dbReference type="GO" id="GO:0000455">
    <property type="term" value="P:enzyme-directed rRNA pseudouridine synthesis"/>
    <property type="evidence" value="ECO:0000318"/>
    <property type="project" value="GO_Central"/>
</dbReference>
<dbReference type="CDD" id="cd02553">
    <property type="entry name" value="PseudoU_synth_RsuA"/>
    <property type="match status" value="1"/>
</dbReference>
<dbReference type="CDD" id="cd00165">
    <property type="entry name" value="S4"/>
    <property type="match status" value="1"/>
</dbReference>
<dbReference type="FunFam" id="3.10.290.10:FF:000009">
    <property type="entry name" value="Pseudouridine synthase"/>
    <property type="match status" value="1"/>
</dbReference>
<dbReference type="FunFam" id="3.30.70.1560:FF:000001">
    <property type="entry name" value="Pseudouridine synthase"/>
    <property type="match status" value="1"/>
</dbReference>
<dbReference type="FunFam" id="3.30.70.580:FF:000004">
    <property type="entry name" value="Pseudouridine synthase"/>
    <property type="match status" value="1"/>
</dbReference>
<dbReference type="Gene3D" id="3.30.70.1560">
    <property type="entry name" value="Alpha-L RNA-binding motif"/>
    <property type="match status" value="1"/>
</dbReference>
<dbReference type="Gene3D" id="3.30.70.580">
    <property type="entry name" value="Pseudouridine synthase I, catalytic domain, N-terminal subdomain"/>
    <property type="match status" value="1"/>
</dbReference>
<dbReference type="Gene3D" id="3.10.290.10">
    <property type="entry name" value="RNA-binding S4 domain"/>
    <property type="match status" value="1"/>
</dbReference>
<dbReference type="InterPro" id="IPR042092">
    <property type="entry name" value="PsdUridine_s_RsuA/RluB/E/F_cat"/>
</dbReference>
<dbReference type="InterPro" id="IPR020103">
    <property type="entry name" value="PsdUridine_synth_cat_dom_sf"/>
</dbReference>
<dbReference type="InterPro" id="IPR006145">
    <property type="entry name" value="PsdUridine_synth_RsuA/RluA"/>
</dbReference>
<dbReference type="InterPro" id="IPR000748">
    <property type="entry name" value="PsdUridine_synth_RsuA/RluB/E/F"/>
</dbReference>
<dbReference type="InterPro" id="IPR018496">
    <property type="entry name" value="PsdUridine_synth_RsuA/RluB_CS"/>
</dbReference>
<dbReference type="InterPro" id="IPR050343">
    <property type="entry name" value="RsuA_PseudoU_synthase"/>
</dbReference>
<dbReference type="InterPro" id="IPR002942">
    <property type="entry name" value="S4_RNA-bd"/>
</dbReference>
<dbReference type="InterPro" id="IPR036986">
    <property type="entry name" value="S4_RNA-bd_sf"/>
</dbReference>
<dbReference type="InterPro" id="IPR020094">
    <property type="entry name" value="TruA/RsuA/RluB/E/F_N"/>
</dbReference>
<dbReference type="NCBIfam" id="NF008097">
    <property type="entry name" value="PRK10839.1"/>
    <property type="match status" value="1"/>
</dbReference>
<dbReference type="NCBIfam" id="TIGR00093">
    <property type="entry name" value="pseudouridine synthase"/>
    <property type="match status" value="1"/>
</dbReference>
<dbReference type="PANTHER" id="PTHR47683:SF4">
    <property type="entry name" value="PSEUDOURIDINE SYNTHASE"/>
    <property type="match status" value="1"/>
</dbReference>
<dbReference type="PANTHER" id="PTHR47683">
    <property type="entry name" value="PSEUDOURIDINE SYNTHASE FAMILY PROTEIN-RELATED"/>
    <property type="match status" value="1"/>
</dbReference>
<dbReference type="Pfam" id="PF00849">
    <property type="entry name" value="PseudoU_synth_2"/>
    <property type="match status" value="1"/>
</dbReference>
<dbReference type="Pfam" id="PF01479">
    <property type="entry name" value="S4"/>
    <property type="match status" value="1"/>
</dbReference>
<dbReference type="SMART" id="SM00363">
    <property type="entry name" value="S4"/>
    <property type="match status" value="1"/>
</dbReference>
<dbReference type="SUPFAM" id="SSF55174">
    <property type="entry name" value="Alpha-L RNA-binding motif"/>
    <property type="match status" value="1"/>
</dbReference>
<dbReference type="SUPFAM" id="SSF55120">
    <property type="entry name" value="Pseudouridine synthase"/>
    <property type="match status" value="1"/>
</dbReference>
<dbReference type="PROSITE" id="PS01149">
    <property type="entry name" value="PSI_RSU"/>
    <property type="match status" value="1"/>
</dbReference>
<dbReference type="PROSITE" id="PS50889">
    <property type="entry name" value="S4"/>
    <property type="match status" value="1"/>
</dbReference>
<keyword id="KW-0413">Isomerase</keyword>
<keyword id="KW-1185">Reference proteome</keyword>
<keyword id="KW-0694">RNA-binding</keyword>
<keyword id="KW-0698">rRNA processing</keyword>
<protein>
    <recommendedName>
        <fullName>Ribosomal small subunit pseudouridine synthase A</fullName>
        <ecNumber>5.4.99.19</ecNumber>
    </recommendedName>
    <alternativeName>
        <fullName>16S pseudouridylate 516 synthase</fullName>
    </alternativeName>
    <alternativeName>
        <fullName>16S rRNA pseudouridine(516) synthase</fullName>
    </alternativeName>
    <alternativeName>
        <fullName>rRNA pseudouridylate synthase A</fullName>
    </alternativeName>
    <alternativeName>
        <fullName>rRNA-uridine isomerase A</fullName>
    </alternativeName>
</protein>
<reference key="1">
    <citation type="journal article" date="2001" name="Nature">
        <title>Complete genome sequence of Salmonella enterica serovar Typhimurium LT2.</title>
        <authorList>
            <person name="McClelland M."/>
            <person name="Sanderson K.E."/>
            <person name="Spieth J."/>
            <person name="Clifton S.W."/>
            <person name="Latreille P."/>
            <person name="Courtney L."/>
            <person name="Porwollik S."/>
            <person name="Ali J."/>
            <person name="Dante M."/>
            <person name="Du F."/>
            <person name="Hou S."/>
            <person name="Layman D."/>
            <person name="Leonard S."/>
            <person name="Nguyen C."/>
            <person name="Scott K."/>
            <person name="Holmes A."/>
            <person name="Grewal N."/>
            <person name="Mulvaney E."/>
            <person name="Ryan E."/>
            <person name="Sun H."/>
            <person name="Florea L."/>
            <person name="Miller W."/>
            <person name="Stoneking T."/>
            <person name="Nhan M."/>
            <person name="Waterston R."/>
            <person name="Wilson R.K."/>
        </authorList>
    </citation>
    <scope>NUCLEOTIDE SEQUENCE [LARGE SCALE GENOMIC DNA]</scope>
    <source>
        <strain>LT2 / SGSC1412 / ATCC 700720</strain>
    </source>
</reference>
<feature type="chain" id="PRO_0000099973" description="Ribosomal small subunit pseudouridine synthase A">
    <location>
        <begin position="1"/>
        <end position="231"/>
    </location>
</feature>
<feature type="domain" description="S4 RNA-binding" evidence="2">
    <location>
        <begin position="1"/>
        <end position="68"/>
    </location>
</feature>
<feature type="active site" description="Nucleophile" evidence="1">
    <location>
        <position position="102"/>
    </location>
</feature>
<organism>
    <name type="scientific">Salmonella typhimurium (strain LT2 / SGSC1412 / ATCC 700720)</name>
    <dbReference type="NCBI Taxonomy" id="99287"/>
    <lineage>
        <taxon>Bacteria</taxon>
        <taxon>Pseudomonadati</taxon>
        <taxon>Pseudomonadota</taxon>
        <taxon>Gammaproteobacteria</taxon>
        <taxon>Enterobacterales</taxon>
        <taxon>Enterobacteriaceae</taxon>
        <taxon>Salmonella</taxon>
    </lineage>
</organism>
<evidence type="ECO:0000250" key="1"/>
<evidence type="ECO:0000255" key="2">
    <source>
        <dbReference type="PROSITE-ProRule" id="PRU00182"/>
    </source>
</evidence>
<evidence type="ECO:0000305" key="3"/>
<comment type="function">
    <text evidence="1">Responsible for synthesis of pseudouridine from uracil-516 in 16S ribosomal RNA.</text>
</comment>
<comment type="catalytic activity">
    <reaction>
        <text>uridine(516) in 16S rRNA = pseudouridine(516) in 16S rRNA</text>
        <dbReference type="Rhea" id="RHEA:38867"/>
        <dbReference type="Rhea" id="RHEA-COMP:10089"/>
        <dbReference type="Rhea" id="RHEA-COMP:10090"/>
        <dbReference type="ChEBI" id="CHEBI:65314"/>
        <dbReference type="ChEBI" id="CHEBI:65315"/>
        <dbReference type="EC" id="5.4.99.19"/>
    </reaction>
</comment>
<comment type="subunit">
    <text evidence="1">Monomer.</text>
</comment>
<comment type="similarity">
    <text evidence="3">Belongs to the pseudouridine synthase RsuA family.</text>
</comment>
<name>RSUA_SALTY</name>
<proteinExistence type="inferred from homology"/>
<accession>P65840</accession>
<accession>Q8XGP8</accession>